<accession>P50452</accession>
<accession>B4DTW2</accession>
<accession>Q7Z2V6</accession>
<accession>Q8N178</accession>
<organism>
    <name type="scientific">Homo sapiens</name>
    <name type="common">Human</name>
    <dbReference type="NCBI Taxonomy" id="9606"/>
    <lineage>
        <taxon>Eukaryota</taxon>
        <taxon>Metazoa</taxon>
        <taxon>Chordata</taxon>
        <taxon>Craniata</taxon>
        <taxon>Vertebrata</taxon>
        <taxon>Euteleostomi</taxon>
        <taxon>Mammalia</taxon>
        <taxon>Eutheria</taxon>
        <taxon>Euarchontoglires</taxon>
        <taxon>Primates</taxon>
        <taxon>Haplorrhini</taxon>
        <taxon>Catarrhini</taxon>
        <taxon>Hominidae</taxon>
        <taxon>Homo</taxon>
    </lineage>
</organism>
<proteinExistence type="evidence at protein level"/>
<evidence type="ECO:0000250" key="1"/>
<evidence type="ECO:0000269" key="2">
    <source>
    </source>
</evidence>
<evidence type="ECO:0000269" key="3">
    <source>
    </source>
</evidence>
<evidence type="ECO:0000269" key="4">
    <source>
    </source>
</evidence>
<evidence type="ECO:0000303" key="5">
    <source>
    </source>
</evidence>
<evidence type="ECO:0000303" key="6">
    <source>
    </source>
</evidence>
<evidence type="ECO:0000305" key="7"/>
<feature type="chain" id="PRO_0000094111" description="Serpin B8">
    <location>
        <begin position="1"/>
        <end position="374"/>
    </location>
</feature>
<feature type="site" description="Reactive bond" evidence="1">
    <location>
        <begin position="339"/>
        <end position="340"/>
    </location>
</feature>
<feature type="splice variant" id="VSP_055135" description="In isoform 3." evidence="5">
    <location>
        <begin position="1"/>
        <end position="182"/>
    </location>
</feature>
<feature type="splice variant" id="VSP_043097" description="In isoform 2." evidence="6">
    <original>VEKALTYEKFKAWTNSEKLTKSKVQVFLPRLKLEESYDLEPFLRRLGMIDAFDEAKADFSGMSTEKNVPLSKVAHKCFVEVNEEGTEAAAATAVVRNSRCSRMEPRFCADHPFLFFIRHHKTNCILFCGRFSSP</original>
    <variation>KE</variation>
    <location>
        <begin position="241"/>
        <end position="374"/>
    </location>
</feature>
<feature type="sequence variant" id="VAR_047110" description="In dbSNP:rs1944270.">
    <original>R</original>
    <variation>Q</variation>
    <location>
        <position position="68"/>
    </location>
</feature>
<feature type="sequence variant" id="VAR_047111" description="In dbSNP:rs1648493.">
    <original>K</original>
    <variation>N</variation>
    <location>
        <position position="158"/>
    </location>
</feature>
<feature type="sequence variant" id="VAR_051947" description="In dbSNP:rs3169983." evidence="2">
    <original>T</original>
    <variation>A</variation>
    <location>
        <position position="304"/>
    </location>
</feature>
<feature type="sequence variant" id="VAR_051948" description="In dbSNP:rs3826616." evidence="4">
    <original>H</original>
    <variation>R</variation>
    <location>
        <position position="359"/>
    </location>
</feature>
<keyword id="KW-0025">Alternative splicing</keyword>
<keyword id="KW-0963">Cytoplasm</keyword>
<keyword id="KW-0646">Protease inhibitor</keyword>
<keyword id="KW-1267">Proteomics identification</keyword>
<keyword id="KW-1185">Reference proteome</keyword>
<keyword id="KW-0722">Serine protease inhibitor</keyword>
<reference key="1">
    <citation type="journal article" date="1995" name="J. Biol. Chem.">
        <title>Molecular cloning, expression, and partial characterization of two novel members of the ovalbumin family of serine proteinase inhibitors.</title>
        <authorList>
            <person name="Sprecher C.A."/>
            <person name="Morgenstern K.A."/>
            <person name="Mathewes S."/>
            <person name="Dahlen J.R."/>
            <person name="Schrader S.K."/>
            <person name="Foster D.C."/>
            <person name="Kisiel W."/>
        </authorList>
    </citation>
    <scope>NUCLEOTIDE SEQUENCE [MRNA] (ISOFORM 1)</scope>
    <scope>VARIANT ARG-359</scope>
    <source>
        <tissue>Placenta</tissue>
    </source>
</reference>
<reference key="2">
    <citation type="journal article" date="2004" name="Nat. Genet.">
        <title>Complete sequencing and characterization of 21,243 full-length human cDNAs.</title>
        <authorList>
            <person name="Ota T."/>
            <person name="Suzuki Y."/>
            <person name="Nishikawa T."/>
            <person name="Otsuki T."/>
            <person name="Sugiyama T."/>
            <person name="Irie R."/>
            <person name="Wakamatsu A."/>
            <person name="Hayashi K."/>
            <person name="Sato H."/>
            <person name="Nagai K."/>
            <person name="Kimura K."/>
            <person name="Makita H."/>
            <person name="Sekine M."/>
            <person name="Obayashi M."/>
            <person name="Nishi T."/>
            <person name="Shibahara T."/>
            <person name="Tanaka T."/>
            <person name="Ishii S."/>
            <person name="Yamamoto J."/>
            <person name="Saito K."/>
            <person name="Kawai Y."/>
            <person name="Isono Y."/>
            <person name="Nakamura Y."/>
            <person name="Nagahari K."/>
            <person name="Murakami K."/>
            <person name="Yasuda T."/>
            <person name="Iwayanagi T."/>
            <person name="Wagatsuma M."/>
            <person name="Shiratori A."/>
            <person name="Sudo H."/>
            <person name="Hosoiri T."/>
            <person name="Kaku Y."/>
            <person name="Kodaira H."/>
            <person name="Kondo H."/>
            <person name="Sugawara M."/>
            <person name="Takahashi M."/>
            <person name="Kanda K."/>
            <person name="Yokoi T."/>
            <person name="Furuya T."/>
            <person name="Kikkawa E."/>
            <person name="Omura Y."/>
            <person name="Abe K."/>
            <person name="Kamihara K."/>
            <person name="Katsuta N."/>
            <person name="Sato K."/>
            <person name="Tanikawa M."/>
            <person name="Yamazaki M."/>
            <person name="Ninomiya K."/>
            <person name="Ishibashi T."/>
            <person name="Yamashita H."/>
            <person name="Murakawa K."/>
            <person name="Fujimori K."/>
            <person name="Tanai H."/>
            <person name="Kimata M."/>
            <person name="Watanabe M."/>
            <person name="Hiraoka S."/>
            <person name="Chiba Y."/>
            <person name="Ishida S."/>
            <person name="Ono Y."/>
            <person name="Takiguchi S."/>
            <person name="Watanabe S."/>
            <person name="Yosida M."/>
            <person name="Hotuta T."/>
            <person name="Kusano J."/>
            <person name="Kanehori K."/>
            <person name="Takahashi-Fujii A."/>
            <person name="Hara H."/>
            <person name="Tanase T.-O."/>
            <person name="Nomura Y."/>
            <person name="Togiya S."/>
            <person name="Komai F."/>
            <person name="Hara R."/>
            <person name="Takeuchi K."/>
            <person name="Arita M."/>
            <person name="Imose N."/>
            <person name="Musashino K."/>
            <person name="Yuuki H."/>
            <person name="Oshima A."/>
            <person name="Sasaki N."/>
            <person name="Aotsuka S."/>
            <person name="Yoshikawa Y."/>
            <person name="Matsunawa H."/>
            <person name="Ichihara T."/>
            <person name="Shiohata N."/>
            <person name="Sano S."/>
            <person name="Moriya S."/>
            <person name="Momiyama H."/>
            <person name="Satoh N."/>
            <person name="Takami S."/>
            <person name="Terashima Y."/>
            <person name="Suzuki O."/>
            <person name="Nakagawa S."/>
            <person name="Senoh A."/>
            <person name="Mizoguchi H."/>
            <person name="Goto Y."/>
            <person name="Shimizu F."/>
            <person name="Wakebe H."/>
            <person name="Hishigaki H."/>
            <person name="Watanabe T."/>
            <person name="Sugiyama A."/>
            <person name="Takemoto M."/>
            <person name="Kawakami B."/>
            <person name="Yamazaki M."/>
            <person name="Watanabe K."/>
            <person name="Kumagai A."/>
            <person name="Itakura S."/>
            <person name="Fukuzumi Y."/>
            <person name="Fujimori Y."/>
            <person name="Komiyama M."/>
            <person name="Tashiro H."/>
            <person name="Tanigami A."/>
            <person name="Fujiwara T."/>
            <person name="Ono T."/>
            <person name="Yamada K."/>
            <person name="Fujii Y."/>
            <person name="Ozaki K."/>
            <person name="Hirao M."/>
            <person name="Ohmori Y."/>
            <person name="Kawabata A."/>
            <person name="Hikiji T."/>
            <person name="Kobatake N."/>
            <person name="Inagaki H."/>
            <person name="Ikema Y."/>
            <person name="Okamoto S."/>
            <person name="Okitani R."/>
            <person name="Kawakami T."/>
            <person name="Noguchi S."/>
            <person name="Itoh T."/>
            <person name="Shigeta K."/>
            <person name="Senba T."/>
            <person name="Matsumura K."/>
            <person name="Nakajima Y."/>
            <person name="Mizuno T."/>
            <person name="Morinaga M."/>
            <person name="Sasaki M."/>
            <person name="Togashi T."/>
            <person name="Oyama M."/>
            <person name="Hata H."/>
            <person name="Watanabe M."/>
            <person name="Komatsu T."/>
            <person name="Mizushima-Sugano J."/>
            <person name="Satoh T."/>
            <person name="Shirai Y."/>
            <person name="Takahashi Y."/>
            <person name="Nakagawa K."/>
            <person name="Okumura K."/>
            <person name="Nagase T."/>
            <person name="Nomura N."/>
            <person name="Kikuchi H."/>
            <person name="Masuho Y."/>
            <person name="Yamashita R."/>
            <person name="Nakai K."/>
            <person name="Yada T."/>
            <person name="Nakamura Y."/>
            <person name="Ohara O."/>
            <person name="Isogai T."/>
            <person name="Sugano S."/>
        </authorList>
    </citation>
    <scope>NUCLEOTIDE SEQUENCE [LARGE SCALE MRNA] (ISOFORM 3)</scope>
    <source>
        <tissue>Placenta</tissue>
    </source>
</reference>
<reference key="3">
    <citation type="journal article" date="2007" name="BMC Genomics">
        <title>The full-ORF clone resource of the German cDNA consortium.</title>
        <authorList>
            <person name="Bechtel S."/>
            <person name="Rosenfelder H."/>
            <person name="Duda A."/>
            <person name="Schmidt C.P."/>
            <person name="Ernst U."/>
            <person name="Wellenreuther R."/>
            <person name="Mehrle A."/>
            <person name="Schuster C."/>
            <person name="Bahr A."/>
            <person name="Bloecker H."/>
            <person name="Heubner D."/>
            <person name="Hoerlein A."/>
            <person name="Michel G."/>
            <person name="Wedler H."/>
            <person name="Koehrer K."/>
            <person name="Ottenwaelder B."/>
            <person name="Poustka A."/>
            <person name="Wiemann S."/>
            <person name="Schupp I."/>
        </authorList>
    </citation>
    <scope>NUCLEOTIDE SEQUENCE [LARGE SCALE MRNA] (ISOFORM 1)</scope>
    <scope>VARIANT ALA-304</scope>
    <source>
        <tissue>Esophagus</tissue>
    </source>
</reference>
<reference key="4">
    <citation type="journal article" date="2005" name="Nature">
        <title>DNA sequence and analysis of human chromosome 18.</title>
        <authorList>
            <person name="Nusbaum C."/>
            <person name="Zody M.C."/>
            <person name="Borowsky M.L."/>
            <person name="Kamal M."/>
            <person name="Kodira C.D."/>
            <person name="Taylor T.D."/>
            <person name="Whittaker C.A."/>
            <person name="Chang J.L."/>
            <person name="Cuomo C.A."/>
            <person name="Dewar K."/>
            <person name="FitzGerald M.G."/>
            <person name="Yang X."/>
            <person name="Abouelleil A."/>
            <person name="Allen N.R."/>
            <person name="Anderson S."/>
            <person name="Bloom T."/>
            <person name="Bugalter B."/>
            <person name="Butler J."/>
            <person name="Cook A."/>
            <person name="DeCaprio D."/>
            <person name="Engels R."/>
            <person name="Garber M."/>
            <person name="Gnirke A."/>
            <person name="Hafez N."/>
            <person name="Hall J.L."/>
            <person name="Norman C.H."/>
            <person name="Itoh T."/>
            <person name="Jaffe D.B."/>
            <person name="Kuroki Y."/>
            <person name="Lehoczky J."/>
            <person name="Lui A."/>
            <person name="Macdonald P."/>
            <person name="Mauceli E."/>
            <person name="Mikkelsen T.S."/>
            <person name="Naylor J.W."/>
            <person name="Nicol R."/>
            <person name="Nguyen C."/>
            <person name="Noguchi H."/>
            <person name="O'Leary S.B."/>
            <person name="Piqani B."/>
            <person name="Smith C.L."/>
            <person name="Talamas J.A."/>
            <person name="Topham K."/>
            <person name="Totoki Y."/>
            <person name="Toyoda A."/>
            <person name="Wain H.M."/>
            <person name="Young S.K."/>
            <person name="Zeng Q."/>
            <person name="Zimmer A.R."/>
            <person name="Fujiyama A."/>
            <person name="Hattori M."/>
            <person name="Birren B.W."/>
            <person name="Sakaki Y."/>
            <person name="Lander E.S."/>
        </authorList>
    </citation>
    <scope>NUCLEOTIDE SEQUENCE [LARGE SCALE GENOMIC DNA]</scope>
</reference>
<reference key="5">
    <citation type="journal article" date="2004" name="Genome Res.">
        <title>The status, quality, and expansion of the NIH full-length cDNA project: the Mammalian Gene Collection (MGC).</title>
        <authorList>
            <consortium name="The MGC Project Team"/>
        </authorList>
    </citation>
    <scope>NUCLEOTIDE SEQUENCE [LARGE SCALE MRNA] (ISOFORM 2)</scope>
    <source>
        <tissue>Skin</tissue>
    </source>
</reference>
<reference key="6">
    <citation type="journal article" date="2011" name="BMC Syst. Biol.">
        <title>Initial characterization of the human central proteome.</title>
        <authorList>
            <person name="Burkard T.R."/>
            <person name="Planyavsky M."/>
            <person name="Kaupe I."/>
            <person name="Breitwieser F.P."/>
            <person name="Buerckstuemmer T."/>
            <person name="Bennett K.L."/>
            <person name="Superti-Furga G."/>
            <person name="Colinge J."/>
        </authorList>
    </citation>
    <scope>IDENTIFICATION BY MASS SPECTROMETRY [LARGE SCALE ANALYSIS]</scope>
</reference>
<reference key="7">
    <citation type="journal article" date="2016" name="Am. J. Hum. Genet.">
        <title>Loss-of-function mutations in SERPINB8 linked to exfoliative ichthyosis with impaired mechanical stability of intercellular adhesions.</title>
        <authorList>
            <person name="Pigors M."/>
            <person name="Sarig O."/>
            <person name="Heinz L."/>
            <person name="Plagnol V."/>
            <person name="Fischer J."/>
            <person name="Mohamad J."/>
            <person name="Malchin N."/>
            <person name="Rajpopat S."/>
            <person name="Kharfi M."/>
            <person name="Lestringant G.G."/>
            <person name="Sprecher E."/>
            <person name="Kelsell D.P."/>
            <person name="Blaydon D.C."/>
        </authorList>
    </citation>
    <scope>FUNCTION</scope>
    <scope>INVOLVEMENT IN PSS5</scope>
</reference>
<sequence length="374" mass="42767">MDDLCEANGTFAISLFKILGEEDNSRNVFFSPMSISSALAMVFMGAKGSTAAQMSQALCLYKDGDIHRGFQSLLSEVNRTGTQYLLRTANRLFGEKTCDFLPDFKEYCQKFYQAELEELSFAEDTEECRKHINDWVAEKTEGKISEVLDAGTVDPLTKLVLVNAIYFKGKWNEQFDRKYTRGMLFKTNEEKKTVQMMFKEAKFKMGYADEVHTQVLELPYVEEELSMVILLPDDNTDLAVVEKALTYEKFKAWTNSEKLTKSKVQVFLPRLKLEESYDLEPFLRRLGMIDAFDEAKADFSGMSTEKNVPLSKVAHKCFVEVNEEGTEAAAATAVVRNSRCSRMEPRFCADHPFLFFIRHHKTNCILFCGRFSSP</sequence>
<comment type="function">
    <text evidence="3">Has an important role in epithelial desmosome-mediated cell-cell adhesion.</text>
</comment>
<comment type="interaction">
    <interactant intactId="EBI-6916752">
        <id>P50452</id>
    </interactant>
    <interactant intactId="EBI-1752465">
        <id>O76039</id>
        <label>CDKL5</label>
    </interactant>
    <organismsDiffer>false</organismsDiffer>
    <experiments>2</experiments>
</comment>
<comment type="subcellular location">
    <subcellularLocation>
        <location>Cytoplasm</location>
    </subcellularLocation>
</comment>
<comment type="alternative products">
    <event type="alternative splicing"/>
    <isoform>
        <id>P50452-1</id>
        <name>1</name>
        <sequence type="displayed"/>
    </isoform>
    <isoform>
        <id>P50452-2</id>
        <name>2</name>
        <sequence type="described" ref="VSP_043097"/>
    </isoform>
    <isoform>
        <id>P50452-3</id>
        <name>3</name>
        <sequence type="described" ref="VSP_055135"/>
    </isoform>
</comment>
<comment type="disease" evidence="3">
    <disease id="DI-04833">
        <name>Peeling skin syndrome 5</name>
        <acronym>PSS5</acronym>
        <description>A form of peeling skin syndrome, a genodermatosis characterized by generalized, continuous shedding of the outer layers of the epidermis. Two main PSS subtypes have been suggested. Patients with non-inflammatory PSS (type A) manifest white scaling, with painless and easy removal of the skin, irritation when in contact with water, dust and sand, and no history of erythema, pruritis or atopy. Inflammatory PSS (type B) is associated with generalized erythema, pruritus and atopy. It is an ichthyosiform erythroderma characterized by lifelong patchy peeling of the entire skin with onset at birth or shortly after. Several patients have been reported with high IgE levels. PSS5 patients manifest hyperkeratosis and superficial peeling of areas of the palmar and dorsal faces of hands and feet. Additional variable features include erythema, superficial scaling of forearms and legs and diffuse yellowish hyperkeratotic palmoplantar plaques. PSS5 inheritance is autosomal recessive.</description>
        <dbReference type="MIM" id="617115"/>
    </disease>
    <text>The disease is caused by variants affecting the gene represented in this entry.</text>
</comment>
<comment type="similarity">
    <text evidence="7">Belongs to the serpin family. Ov-serpin subfamily.</text>
</comment>
<name>SPB8_HUMAN</name>
<dbReference type="EMBL" id="L40377">
    <property type="protein sequence ID" value="AAC41939.1"/>
    <property type="molecule type" value="mRNA"/>
</dbReference>
<dbReference type="EMBL" id="AK300391">
    <property type="protein sequence ID" value="BAG62124.1"/>
    <property type="molecule type" value="mRNA"/>
</dbReference>
<dbReference type="EMBL" id="BX571754">
    <property type="protein sequence ID" value="CAE11879.1"/>
    <property type="molecule type" value="mRNA"/>
</dbReference>
<dbReference type="EMBL" id="AC009802">
    <property type="status" value="NOT_ANNOTATED_CDS"/>
    <property type="molecule type" value="Genomic_DNA"/>
</dbReference>
<dbReference type="EMBL" id="BC034528">
    <property type="protein sequence ID" value="AAH34528.1"/>
    <property type="molecule type" value="mRNA"/>
</dbReference>
<dbReference type="CCDS" id="CCDS11991.1">
    <molecule id="P50452-1"/>
</dbReference>
<dbReference type="CCDS" id="CCDS42442.1">
    <molecule id="P50452-2"/>
</dbReference>
<dbReference type="CCDS" id="CCDS62460.1">
    <molecule id="P50452-3"/>
</dbReference>
<dbReference type="PIR" id="A59273">
    <property type="entry name" value="A59273"/>
</dbReference>
<dbReference type="RefSeq" id="NP_001027018.1">
    <molecule id="P50452-2"/>
    <property type="nucleotide sequence ID" value="NM_001031848.2"/>
</dbReference>
<dbReference type="RefSeq" id="NP_001263419.1">
    <molecule id="P50452-3"/>
    <property type="nucleotide sequence ID" value="NM_001276490.2"/>
</dbReference>
<dbReference type="RefSeq" id="NP_001353127.1">
    <molecule id="P50452-1"/>
    <property type="nucleotide sequence ID" value="NM_001366198.1"/>
</dbReference>
<dbReference type="RefSeq" id="NP_002631.3">
    <molecule id="P50452-1"/>
    <property type="nucleotide sequence ID" value="NM_002640.3"/>
</dbReference>
<dbReference type="RefSeq" id="NP_942130.1">
    <molecule id="P50452-1"/>
    <property type="nucleotide sequence ID" value="NM_198833.2"/>
</dbReference>
<dbReference type="SMR" id="P50452"/>
<dbReference type="BioGRID" id="111289">
    <property type="interactions" value="102"/>
</dbReference>
<dbReference type="FunCoup" id="P50452">
    <property type="interactions" value="168"/>
</dbReference>
<dbReference type="IntAct" id="P50452">
    <property type="interactions" value="66"/>
</dbReference>
<dbReference type="STRING" id="9606.ENSP00000331368"/>
<dbReference type="MEROPS" id="I04.013"/>
<dbReference type="iPTMnet" id="P50452"/>
<dbReference type="MetOSite" id="P50452"/>
<dbReference type="PhosphoSitePlus" id="P50452"/>
<dbReference type="SwissPalm" id="P50452"/>
<dbReference type="BioMuta" id="SERPINB8"/>
<dbReference type="DMDM" id="212276474"/>
<dbReference type="jPOST" id="P50452"/>
<dbReference type="MassIVE" id="P50452"/>
<dbReference type="PaxDb" id="9606-ENSP00000381072"/>
<dbReference type="PeptideAtlas" id="P50452"/>
<dbReference type="ProteomicsDB" id="5132"/>
<dbReference type="ProteomicsDB" id="56226">
    <molecule id="P50452-1"/>
</dbReference>
<dbReference type="ProteomicsDB" id="56227">
    <molecule id="P50452-2"/>
</dbReference>
<dbReference type="Pumba" id="P50452"/>
<dbReference type="Antibodypedia" id="23169">
    <property type="antibodies" value="296 antibodies from 31 providers"/>
</dbReference>
<dbReference type="DNASU" id="5271"/>
<dbReference type="Ensembl" id="ENST00000353706.6">
    <molecule id="P50452-1"/>
    <property type="protein sequence ID" value="ENSP00000331368.3"/>
    <property type="gene ID" value="ENSG00000166401.15"/>
</dbReference>
<dbReference type="Ensembl" id="ENST00000397985.7">
    <molecule id="P50452-1"/>
    <property type="protein sequence ID" value="ENSP00000381072.2"/>
    <property type="gene ID" value="ENSG00000166401.15"/>
</dbReference>
<dbReference type="Ensembl" id="ENST00000397988.7">
    <molecule id="P50452-2"/>
    <property type="protein sequence ID" value="ENSP00000381075.3"/>
    <property type="gene ID" value="ENSG00000166401.15"/>
</dbReference>
<dbReference type="Ensembl" id="ENST00000542677.5">
    <molecule id="P50452-3"/>
    <property type="protein sequence ID" value="ENSP00000438328.1"/>
    <property type="gene ID" value="ENSG00000166401.15"/>
</dbReference>
<dbReference type="GeneID" id="5271"/>
<dbReference type="KEGG" id="hsa:5271"/>
<dbReference type="MANE-Select" id="ENST00000397985.7">
    <property type="protein sequence ID" value="ENSP00000381072.2"/>
    <property type="RefSeq nucleotide sequence ID" value="NM_002640.4"/>
    <property type="RefSeq protein sequence ID" value="NP_002631.3"/>
</dbReference>
<dbReference type="UCSC" id="uc002ljt.4">
    <molecule id="P50452-1"/>
    <property type="organism name" value="human"/>
</dbReference>
<dbReference type="AGR" id="HGNC:8952"/>
<dbReference type="CTD" id="5271"/>
<dbReference type="DisGeNET" id="5271"/>
<dbReference type="GeneCards" id="SERPINB8"/>
<dbReference type="HGNC" id="HGNC:8952">
    <property type="gene designation" value="SERPINB8"/>
</dbReference>
<dbReference type="HPA" id="ENSG00000166401">
    <property type="expression patterns" value="Tissue enhanced (skin)"/>
</dbReference>
<dbReference type="MalaCards" id="SERPINB8"/>
<dbReference type="MIM" id="601697">
    <property type="type" value="gene"/>
</dbReference>
<dbReference type="MIM" id="617115">
    <property type="type" value="phenotype"/>
</dbReference>
<dbReference type="neXtProt" id="NX_P50452"/>
<dbReference type="OpenTargets" id="ENSG00000166401"/>
<dbReference type="Orphanet" id="289586">
    <property type="disease" value="Exfoliative ichthyosis"/>
</dbReference>
<dbReference type="Orphanet" id="263548">
    <property type="disease" value="Peeling skin syndrome type A"/>
</dbReference>
<dbReference type="PharmGKB" id="PA35517"/>
<dbReference type="VEuPathDB" id="HostDB:ENSG00000166401"/>
<dbReference type="eggNOG" id="KOG2392">
    <property type="taxonomic scope" value="Eukaryota"/>
</dbReference>
<dbReference type="GeneTree" id="ENSGT00940000154835"/>
<dbReference type="HOGENOM" id="CLU_023330_0_2_1"/>
<dbReference type="InParanoid" id="P50452"/>
<dbReference type="OMA" id="RVAHKCF"/>
<dbReference type="OrthoDB" id="671595at2759"/>
<dbReference type="PAN-GO" id="P50452">
    <property type="GO annotations" value="4 GO annotations based on evolutionary models"/>
</dbReference>
<dbReference type="PhylomeDB" id="P50452"/>
<dbReference type="TreeFam" id="TF352619"/>
<dbReference type="PathwayCommons" id="P50452"/>
<dbReference type="Reactome" id="R-HSA-75205">
    <property type="pathway name" value="Dissolution of Fibrin Clot"/>
</dbReference>
<dbReference type="SABIO-RK" id="P50452"/>
<dbReference type="SignaLink" id="P50452"/>
<dbReference type="BioGRID-ORCS" id="5271">
    <property type="hits" value="5 hits in 1146 CRISPR screens"/>
</dbReference>
<dbReference type="GeneWiki" id="SERPINB8"/>
<dbReference type="GenomeRNAi" id="5271"/>
<dbReference type="Pharos" id="P50452">
    <property type="development level" value="Tbio"/>
</dbReference>
<dbReference type="PRO" id="PR:P50452"/>
<dbReference type="Proteomes" id="UP000005640">
    <property type="component" value="Chromosome 18"/>
</dbReference>
<dbReference type="RNAct" id="P50452">
    <property type="molecule type" value="protein"/>
</dbReference>
<dbReference type="Bgee" id="ENSG00000166401">
    <property type="expression patterns" value="Expressed in monocyte and 110 other cell types or tissues"/>
</dbReference>
<dbReference type="ExpressionAtlas" id="P50452">
    <property type="expression patterns" value="baseline and differential"/>
</dbReference>
<dbReference type="GO" id="GO:0062023">
    <property type="term" value="C:collagen-containing extracellular matrix"/>
    <property type="evidence" value="ECO:0007005"/>
    <property type="project" value="BHF-UCL"/>
</dbReference>
<dbReference type="GO" id="GO:0005737">
    <property type="term" value="C:cytoplasm"/>
    <property type="evidence" value="ECO:0000318"/>
    <property type="project" value="GO_Central"/>
</dbReference>
<dbReference type="GO" id="GO:0005829">
    <property type="term" value="C:cytosol"/>
    <property type="evidence" value="ECO:0000314"/>
    <property type="project" value="UniProtKB"/>
</dbReference>
<dbReference type="GO" id="GO:0070062">
    <property type="term" value="C:extracellular exosome"/>
    <property type="evidence" value="ECO:0007005"/>
    <property type="project" value="UniProtKB"/>
</dbReference>
<dbReference type="GO" id="GO:0005615">
    <property type="term" value="C:extracellular space"/>
    <property type="evidence" value="ECO:0000318"/>
    <property type="project" value="GO_Central"/>
</dbReference>
<dbReference type="GO" id="GO:0004867">
    <property type="term" value="F:serine-type endopeptidase inhibitor activity"/>
    <property type="evidence" value="ECO:0000314"/>
    <property type="project" value="UniProtKB"/>
</dbReference>
<dbReference type="GO" id="GO:0090136">
    <property type="term" value="P:epithelial cell-cell adhesion"/>
    <property type="evidence" value="ECO:0000315"/>
    <property type="project" value="UniProtKB"/>
</dbReference>
<dbReference type="GO" id="GO:0010951">
    <property type="term" value="P:negative regulation of endopeptidase activity"/>
    <property type="evidence" value="ECO:0000314"/>
    <property type="project" value="UniProtKB"/>
</dbReference>
<dbReference type="CDD" id="cd19567">
    <property type="entry name" value="serpinB8_CAP-2"/>
    <property type="match status" value="1"/>
</dbReference>
<dbReference type="FunFam" id="2.30.39.10:FF:000001">
    <property type="entry name" value="Serpin family B member 2"/>
    <property type="match status" value="1"/>
</dbReference>
<dbReference type="FunFam" id="3.30.497.10:FF:000018">
    <property type="entry name" value="Serpin family B member 8"/>
    <property type="match status" value="1"/>
</dbReference>
<dbReference type="Gene3D" id="2.30.39.10">
    <property type="entry name" value="Alpha-1-antitrypsin, domain 1"/>
    <property type="match status" value="1"/>
</dbReference>
<dbReference type="Gene3D" id="3.30.497.10">
    <property type="entry name" value="Antithrombin, subunit I, domain 2"/>
    <property type="match status" value="1"/>
</dbReference>
<dbReference type="InterPro" id="IPR023795">
    <property type="entry name" value="Serpin_CS"/>
</dbReference>
<dbReference type="InterPro" id="IPR023796">
    <property type="entry name" value="Serpin_dom"/>
</dbReference>
<dbReference type="InterPro" id="IPR000215">
    <property type="entry name" value="Serpin_fam"/>
</dbReference>
<dbReference type="InterPro" id="IPR036186">
    <property type="entry name" value="Serpin_sf"/>
</dbReference>
<dbReference type="InterPro" id="IPR042178">
    <property type="entry name" value="Serpin_sf_1"/>
</dbReference>
<dbReference type="InterPro" id="IPR042185">
    <property type="entry name" value="Serpin_sf_2"/>
</dbReference>
<dbReference type="PANTHER" id="PTHR11461">
    <property type="entry name" value="SERINE PROTEASE INHIBITOR, SERPIN"/>
    <property type="match status" value="1"/>
</dbReference>
<dbReference type="PANTHER" id="PTHR11461:SF166">
    <property type="entry name" value="SERPIN B8"/>
    <property type="match status" value="1"/>
</dbReference>
<dbReference type="Pfam" id="PF00079">
    <property type="entry name" value="Serpin"/>
    <property type="match status" value="1"/>
</dbReference>
<dbReference type="SMART" id="SM00093">
    <property type="entry name" value="SERPIN"/>
    <property type="match status" value="1"/>
</dbReference>
<dbReference type="SUPFAM" id="SSF56574">
    <property type="entry name" value="Serpins"/>
    <property type="match status" value="1"/>
</dbReference>
<dbReference type="PROSITE" id="PS00284">
    <property type="entry name" value="SERPIN"/>
    <property type="match status" value="1"/>
</dbReference>
<protein>
    <recommendedName>
        <fullName>Serpin B8</fullName>
    </recommendedName>
    <alternativeName>
        <fullName>Cytoplasmic antiproteinase 2</fullName>
        <shortName>CAP-2</shortName>
        <shortName>CAP2</shortName>
    </alternativeName>
    <alternativeName>
        <fullName>Peptidase inhibitor 8</fullName>
        <shortName>PI-8</shortName>
    </alternativeName>
</protein>
<gene>
    <name type="primary">SERPINB8</name>
    <name type="synonym">PI8</name>
</gene>